<sequence length="136" mass="15402">MARTKQTARKSTGGKAPRKQLATKAARKSAPATGGVKKPHRYRPGTVALREIRRYQKSTELLIRKLPFQRLVREIAQDFKTELRFQSSAVMALQEASEAYLVGLFEDTNLCAIHAKRVTIMPKDIQLARRIRGERA</sequence>
<accession>P69072</accession>
<accession>P02298</accession>
<accession>P05320</accession>
<accession>P05321</accession>
<accession>P05322</accession>
<dbReference type="EMBL" id="X00628">
    <property type="protein sequence ID" value="CAA25262.1"/>
    <property type="molecule type" value="Genomic_DNA"/>
</dbReference>
<dbReference type="EMBL" id="X00593">
    <property type="protein sequence ID" value="CAA25242.1"/>
    <property type="molecule type" value="Genomic_DNA"/>
</dbReference>
<dbReference type="RefSeq" id="XP_054754711.1">
    <property type="nucleotide sequence ID" value="XM_054898736.2"/>
</dbReference>
<dbReference type="RefSeq" id="XP_054755291.1">
    <property type="nucleotide sequence ID" value="XM_054899316.2"/>
</dbReference>
<dbReference type="RefSeq" id="XP_054762606.1">
    <property type="nucleotide sequence ID" value="XM_054906631.2"/>
</dbReference>
<dbReference type="RefSeq" id="XP_063958635.1">
    <property type="nucleotide sequence ID" value="XM_064102565.1"/>
</dbReference>
<dbReference type="RefSeq" id="XP_063969323.1">
    <property type="nucleotide sequence ID" value="XM_064113253.1"/>
</dbReference>
<dbReference type="SMR" id="P69072"/>
<dbReference type="EnsemblMetazoa" id="XM_054898736.1">
    <property type="protein sequence ID" value="XP_054754711.1"/>
    <property type="gene ID" value="LOC129260766"/>
</dbReference>
<dbReference type="EnsemblMetazoa" id="XM_054899308.1">
    <property type="protein sequence ID" value="XP_054755283.1"/>
    <property type="gene ID" value="LOC129261251"/>
</dbReference>
<dbReference type="EnsemblMetazoa" id="XM_054899316.1">
    <property type="protein sequence ID" value="XP_054755291.1"/>
    <property type="gene ID" value="LOC129261258"/>
</dbReference>
<dbReference type="EnsemblMetazoa" id="XM_054900632.1">
    <property type="protein sequence ID" value="XP_054756607.1"/>
    <property type="gene ID" value="LOC129262502"/>
</dbReference>
<dbReference type="EnsemblMetazoa" id="XM_054905893.1">
    <property type="protein sequence ID" value="XP_054761868.1"/>
    <property type="gene ID" value="LOC129268331"/>
</dbReference>
<dbReference type="EnsemblMetazoa" id="XM_054906631.1">
    <property type="protein sequence ID" value="XP_054762606.1"/>
    <property type="gene ID" value="LOC129269167"/>
</dbReference>
<dbReference type="EnsemblMetazoa" id="XM_054918145.1">
    <property type="protein sequence ID" value="XP_054774120.1"/>
    <property type="gene ID" value="LOC129282216"/>
</dbReference>
<dbReference type="EnsemblMetazoa" id="XM_054919458.1">
    <property type="protein sequence ID" value="XP_054775433.1"/>
    <property type="gene ID" value="LOC129283853"/>
</dbReference>
<dbReference type="EnsemblMetazoa" id="XM_054919460.1">
    <property type="protein sequence ID" value="XP_054775435.1"/>
    <property type="gene ID" value="LOC129283854"/>
</dbReference>
<dbReference type="EnsemblMetazoa" id="XM_054919461.1">
    <property type="protein sequence ID" value="XP_054775436.1"/>
    <property type="gene ID" value="LOC129283856"/>
</dbReference>
<dbReference type="EnsemblMetazoa" id="XM_054919462.1">
    <property type="protein sequence ID" value="XP_054775437.1"/>
    <property type="gene ID" value="LOC129283857"/>
</dbReference>
<dbReference type="EnsemblMetazoa" id="XM_054919463.1">
    <property type="protein sequence ID" value="XP_054775438.1"/>
    <property type="gene ID" value="LOC129283858"/>
</dbReference>
<dbReference type="EnsemblMetazoa" id="XM_054919550.1">
    <property type="protein sequence ID" value="XP_054775525.1"/>
    <property type="gene ID" value="LOC129284021"/>
</dbReference>
<dbReference type="GeneID" id="129260766"/>
<dbReference type="GeneID" id="129261258"/>
<dbReference type="GeneID" id="129262502"/>
<dbReference type="GeneID" id="129269167"/>
<dbReference type="GeneID" id="129282216"/>
<dbReference type="OrthoDB" id="6066210at2759"/>
<dbReference type="GO" id="GO:0000786">
    <property type="term" value="C:nucleosome"/>
    <property type="evidence" value="ECO:0007669"/>
    <property type="project" value="UniProtKB-KW"/>
</dbReference>
<dbReference type="GO" id="GO:0005634">
    <property type="term" value="C:nucleus"/>
    <property type="evidence" value="ECO:0007669"/>
    <property type="project" value="UniProtKB-SubCell"/>
</dbReference>
<dbReference type="GO" id="GO:0003677">
    <property type="term" value="F:DNA binding"/>
    <property type="evidence" value="ECO:0007669"/>
    <property type="project" value="UniProtKB-KW"/>
</dbReference>
<dbReference type="GO" id="GO:0046982">
    <property type="term" value="F:protein heterodimerization activity"/>
    <property type="evidence" value="ECO:0007669"/>
    <property type="project" value="InterPro"/>
</dbReference>
<dbReference type="GO" id="GO:0030527">
    <property type="term" value="F:structural constituent of chromatin"/>
    <property type="evidence" value="ECO:0007669"/>
    <property type="project" value="InterPro"/>
</dbReference>
<dbReference type="CDD" id="cd22911">
    <property type="entry name" value="HFD_H3"/>
    <property type="match status" value="1"/>
</dbReference>
<dbReference type="FunFam" id="1.10.20.10:FF:000078">
    <property type="entry name" value="Histone H3"/>
    <property type="match status" value="1"/>
</dbReference>
<dbReference type="FunFam" id="1.10.20.10:FF:000044">
    <property type="entry name" value="Histone H3.3"/>
    <property type="match status" value="1"/>
</dbReference>
<dbReference type="Gene3D" id="1.10.20.10">
    <property type="entry name" value="Histone, subunit A"/>
    <property type="match status" value="1"/>
</dbReference>
<dbReference type="InterPro" id="IPR009072">
    <property type="entry name" value="Histone-fold"/>
</dbReference>
<dbReference type="InterPro" id="IPR007125">
    <property type="entry name" value="Histone_H2A/H2B/H3"/>
</dbReference>
<dbReference type="InterPro" id="IPR000164">
    <property type="entry name" value="Histone_H3/CENP-A"/>
</dbReference>
<dbReference type="PANTHER" id="PTHR11426">
    <property type="entry name" value="HISTONE H3"/>
    <property type="match status" value="1"/>
</dbReference>
<dbReference type="Pfam" id="PF00125">
    <property type="entry name" value="Histone"/>
    <property type="match status" value="1"/>
</dbReference>
<dbReference type="PRINTS" id="PR00622">
    <property type="entry name" value="HISTONEH3"/>
</dbReference>
<dbReference type="SMART" id="SM00428">
    <property type="entry name" value="H3"/>
    <property type="match status" value="1"/>
</dbReference>
<dbReference type="SUPFAM" id="SSF47113">
    <property type="entry name" value="Histone-fold"/>
    <property type="match status" value="1"/>
</dbReference>
<dbReference type="PROSITE" id="PS00322">
    <property type="entry name" value="HISTONE_H3_1"/>
    <property type="match status" value="1"/>
</dbReference>
<dbReference type="PROSITE" id="PS00959">
    <property type="entry name" value="HISTONE_H3_2"/>
    <property type="match status" value="1"/>
</dbReference>
<feature type="initiator methionine" description="Removed" evidence="1">
    <location>
        <position position="1"/>
    </location>
</feature>
<feature type="chain" id="PRO_0000221312" description="Histone H3, embryonic">
    <location>
        <begin position="2"/>
        <end position="136"/>
    </location>
</feature>
<feature type="region of interest" description="Disordered" evidence="2">
    <location>
        <begin position="1"/>
        <end position="43"/>
    </location>
</feature>
<feature type="modified residue" description="N6-methylated lysine" evidence="1">
    <location>
        <position position="5"/>
    </location>
</feature>
<feature type="modified residue" description="N6-acetyllysine; alternate" evidence="1">
    <location>
        <position position="10"/>
    </location>
</feature>
<feature type="modified residue" description="N6-methylated lysine; alternate" evidence="1">
    <location>
        <position position="10"/>
    </location>
</feature>
<feature type="modified residue" description="Phosphoserine" evidence="1">
    <location>
        <position position="11"/>
    </location>
</feature>
<feature type="modified residue" description="N6-acetyllysine" evidence="1">
    <location>
        <position position="15"/>
    </location>
</feature>
<feature type="modified residue" description="N6-acetyllysine" evidence="1">
    <location>
        <position position="24"/>
    </location>
</feature>
<feature type="modified residue" description="N6-methylated lysine" evidence="1">
    <location>
        <position position="28"/>
    </location>
</feature>
<feature type="modified residue" description="N6-methylated lysine" evidence="1">
    <location>
        <position position="37"/>
    </location>
</feature>
<feature type="modified residue" description="N6-methylated lysine" evidence="1">
    <location>
        <position position="80"/>
    </location>
</feature>
<organism>
    <name type="scientific">Lytechinus pictus</name>
    <name type="common">Painted sea urchin</name>
    <dbReference type="NCBI Taxonomy" id="7653"/>
    <lineage>
        <taxon>Eukaryota</taxon>
        <taxon>Metazoa</taxon>
        <taxon>Echinodermata</taxon>
        <taxon>Eleutherozoa</taxon>
        <taxon>Echinozoa</taxon>
        <taxon>Echinoidea</taxon>
        <taxon>Euechinoidea</taxon>
        <taxon>Echinacea</taxon>
        <taxon>Temnopleuroida</taxon>
        <taxon>Toxopneustidae</taxon>
        <taxon>Lytechinus</taxon>
    </lineage>
</organism>
<reference key="1">
    <citation type="journal article" date="1984" name="J. Mol. Biol.">
        <title>Sequence comparisons of non-allelic late histone genes and their early stage counterparts. Evidence for gene conversion within the sea urchin late stage gene family.</title>
        <authorList>
            <person name="Roberts S.B."/>
            <person name="Weisser K.E."/>
            <person name="Childs G.J."/>
        </authorList>
    </citation>
    <scope>NUCLEOTIDE SEQUENCE [GENOMIC DNA]</scope>
</reference>
<keyword id="KW-0007">Acetylation</keyword>
<keyword id="KW-0158">Chromosome</keyword>
<keyword id="KW-0238">DNA-binding</keyword>
<keyword id="KW-0488">Methylation</keyword>
<keyword id="KW-0544">Nucleosome core</keyword>
<keyword id="KW-0539">Nucleus</keyword>
<keyword id="KW-0597">Phosphoprotein</keyword>
<protein>
    <recommendedName>
        <fullName>Histone H3, embryonic</fullName>
    </recommendedName>
</protein>
<proteinExistence type="evidence at transcript level"/>
<name>H3_LYTPI</name>
<evidence type="ECO:0000250" key="1"/>
<evidence type="ECO:0000256" key="2">
    <source>
        <dbReference type="SAM" id="MobiDB-lite"/>
    </source>
</evidence>
<evidence type="ECO:0000305" key="3"/>
<comment type="function">
    <text>Core component of nucleosome. Nucleosomes wrap and compact DNA into chromatin, limiting DNA accessibility to the cellular machineries which require DNA as a template. Histones thereby play a central role in transcription regulation, DNA repair, DNA replication and chromosomal stability. DNA accessibility is regulated via a complex set of post-translational modifications of histones, also called histone code, and nucleosome remodeling.</text>
</comment>
<comment type="subunit">
    <text>The nucleosome is a histone octamer containing two molecules each of H2A, H2B, H3 and H4 assembled in one H3-H4 heterotetramer and two H2A-H2B heterodimers. The octamer wraps approximately 147 bp of DNA.</text>
</comment>
<comment type="subcellular location">
    <subcellularLocation>
        <location evidence="1">Nucleus</location>
    </subcellularLocation>
    <subcellularLocation>
        <location evidence="1">Chromosome</location>
    </subcellularLocation>
</comment>
<comment type="developmental stage">
    <text>This histone is expressed during late embryonic development.</text>
</comment>
<comment type="PTM">
    <text evidence="1">Acetylation is generally linked to gene activation.</text>
</comment>
<comment type="PTM">
    <text evidence="1">Methylation at Lys-5 is linked to gene activation. Methylation at Lys-10 is linked to gene repression (By similarity).</text>
</comment>
<comment type="similarity">
    <text evidence="3">Belongs to the histone H3 family.</text>
</comment>